<proteinExistence type="inferred from homology"/>
<gene>
    <name evidence="1" type="primary">nuoB2</name>
    <name type="ordered locus">Rcas_2089</name>
</gene>
<reference key="1">
    <citation type="submission" date="2007-08" db="EMBL/GenBank/DDBJ databases">
        <title>Complete sequence of Roseiflexus castenholzii DSM 13941.</title>
        <authorList>
            <consortium name="US DOE Joint Genome Institute"/>
            <person name="Copeland A."/>
            <person name="Lucas S."/>
            <person name="Lapidus A."/>
            <person name="Barry K."/>
            <person name="Glavina del Rio T."/>
            <person name="Dalin E."/>
            <person name="Tice H."/>
            <person name="Pitluck S."/>
            <person name="Thompson L.S."/>
            <person name="Brettin T."/>
            <person name="Bruce D."/>
            <person name="Detter J.C."/>
            <person name="Han C."/>
            <person name="Tapia R."/>
            <person name="Schmutz J."/>
            <person name="Larimer F."/>
            <person name="Land M."/>
            <person name="Hauser L."/>
            <person name="Kyrpides N."/>
            <person name="Mikhailova N."/>
            <person name="Bryant D.A."/>
            <person name="Hanada S."/>
            <person name="Tsukatani Y."/>
            <person name="Richardson P."/>
        </authorList>
    </citation>
    <scope>NUCLEOTIDE SEQUENCE [LARGE SCALE GENOMIC DNA]</scope>
    <source>
        <strain>DSM 13941 / HLO8</strain>
    </source>
</reference>
<comment type="function">
    <text evidence="1">NDH-1 shuttles electrons from NADH, via FMN and iron-sulfur (Fe-S) centers, to quinones in the respiratory chain. The immediate electron acceptor for the enzyme in this species is believed to be ubiquinone. Couples the redox reaction to proton translocation (for every two electrons transferred, four hydrogen ions are translocated across the cytoplasmic membrane), and thus conserves the redox energy in a proton gradient.</text>
</comment>
<comment type="catalytic activity">
    <reaction evidence="1">
        <text>a quinone + NADH + 5 H(+)(in) = a quinol + NAD(+) + 4 H(+)(out)</text>
        <dbReference type="Rhea" id="RHEA:57888"/>
        <dbReference type="ChEBI" id="CHEBI:15378"/>
        <dbReference type="ChEBI" id="CHEBI:24646"/>
        <dbReference type="ChEBI" id="CHEBI:57540"/>
        <dbReference type="ChEBI" id="CHEBI:57945"/>
        <dbReference type="ChEBI" id="CHEBI:132124"/>
    </reaction>
</comment>
<comment type="cofactor">
    <cofactor evidence="1">
        <name>[4Fe-4S] cluster</name>
        <dbReference type="ChEBI" id="CHEBI:49883"/>
    </cofactor>
    <text evidence="1">Binds 1 [4Fe-4S] cluster.</text>
</comment>
<comment type="subunit">
    <text evidence="1">NDH-1 is composed of 14 different subunits. Subunits NuoB, C, D, E, F, and G constitute the peripheral sector of the complex.</text>
</comment>
<comment type="subcellular location">
    <subcellularLocation>
        <location evidence="1">Cell membrane</location>
        <topology evidence="1">Peripheral membrane protein</topology>
        <orientation evidence="1">Cytoplasmic side</orientation>
    </subcellularLocation>
</comment>
<comment type="similarity">
    <text evidence="1">Belongs to the complex I 20 kDa subunit family.</text>
</comment>
<evidence type="ECO:0000255" key="1">
    <source>
        <dbReference type="HAMAP-Rule" id="MF_01356"/>
    </source>
</evidence>
<evidence type="ECO:0000256" key="2">
    <source>
        <dbReference type="SAM" id="MobiDB-lite"/>
    </source>
</evidence>
<organism>
    <name type="scientific">Roseiflexus castenholzii (strain DSM 13941 / HLO8)</name>
    <dbReference type="NCBI Taxonomy" id="383372"/>
    <lineage>
        <taxon>Bacteria</taxon>
        <taxon>Bacillati</taxon>
        <taxon>Chloroflexota</taxon>
        <taxon>Chloroflexia</taxon>
        <taxon>Chloroflexales</taxon>
        <taxon>Roseiflexineae</taxon>
        <taxon>Roseiflexaceae</taxon>
        <taxon>Roseiflexus</taxon>
    </lineage>
</organism>
<protein>
    <recommendedName>
        <fullName evidence="1">NADH-quinone oxidoreductase subunit B 2</fullName>
        <ecNumber evidence="1">7.1.1.-</ecNumber>
    </recommendedName>
    <alternativeName>
        <fullName evidence="1">NADH dehydrogenase I subunit B 2</fullName>
    </alternativeName>
    <alternativeName>
        <fullName evidence="1">NDH-1 subunit B 2</fullName>
    </alternativeName>
</protein>
<dbReference type="EC" id="7.1.1.-" evidence="1"/>
<dbReference type="EMBL" id="CP000804">
    <property type="protein sequence ID" value="ABU58175.1"/>
    <property type="molecule type" value="Genomic_DNA"/>
</dbReference>
<dbReference type="RefSeq" id="WP_012120599.1">
    <property type="nucleotide sequence ID" value="NC_009767.1"/>
</dbReference>
<dbReference type="SMR" id="A7NL05"/>
<dbReference type="STRING" id="383372.Rcas_2089"/>
<dbReference type="KEGG" id="rca:Rcas_2089"/>
<dbReference type="eggNOG" id="COG0377">
    <property type="taxonomic scope" value="Bacteria"/>
</dbReference>
<dbReference type="HOGENOM" id="CLU_055737_3_0_0"/>
<dbReference type="OrthoDB" id="9786737at2"/>
<dbReference type="Proteomes" id="UP000000263">
    <property type="component" value="Chromosome"/>
</dbReference>
<dbReference type="GO" id="GO:0005886">
    <property type="term" value="C:plasma membrane"/>
    <property type="evidence" value="ECO:0007669"/>
    <property type="project" value="UniProtKB-SubCell"/>
</dbReference>
<dbReference type="GO" id="GO:0045271">
    <property type="term" value="C:respiratory chain complex I"/>
    <property type="evidence" value="ECO:0007669"/>
    <property type="project" value="TreeGrafter"/>
</dbReference>
<dbReference type="GO" id="GO:0051539">
    <property type="term" value="F:4 iron, 4 sulfur cluster binding"/>
    <property type="evidence" value="ECO:0007669"/>
    <property type="project" value="UniProtKB-KW"/>
</dbReference>
<dbReference type="GO" id="GO:0005506">
    <property type="term" value="F:iron ion binding"/>
    <property type="evidence" value="ECO:0007669"/>
    <property type="project" value="UniProtKB-UniRule"/>
</dbReference>
<dbReference type="GO" id="GO:0008137">
    <property type="term" value="F:NADH dehydrogenase (ubiquinone) activity"/>
    <property type="evidence" value="ECO:0007669"/>
    <property type="project" value="InterPro"/>
</dbReference>
<dbReference type="GO" id="GO:0050136">
    <property type="term" value="F:NADH:ubiquinone reductase (non-electrogenic) activity"/>
    <property type="evidence" value="ECO:0007669"/>
    <property type="project" value="UniProtKB-UniRule"/>
</dbReference>
<dbReference type="GO" id="GO:0048038">
    <property type="term" value="F:quinone binding"/>
    <property type="evidence" value="ECO:0007669"/>
    <property type="project" value="UniProtKB-KW"/>
</dbReference>
<dbReference type="GO" id="GO:0009060">
    <property type="term" value="P:aerobic respiration"/>
    <property type="evidence" value="ECO:0007669"/>
    <property type="project" value="TreeGrafter"/>
</dbReference>
<dbReference type="GO" id="GO:0015990">
    <property type="term" value="P:electron transport coupled proton transport"/>
    <property type="evidence" value="ECO:0007669"/>
    <property type="project" value="TreeGrafter"/>
</dbReference>
<dbReference type="FunFam" id="3.40.50.12280:FF:000002">
    <property type="entry name" value="NADH-quinone oxidoreductase subunit B"/>
    <property type="match status" value="1"/>
</dbReference>
<dbReference type="Gene3D" id="3.40.50.12280">
    <property type="match status" value="1"/>
</dbReference>
<dbReference type="HAMAP" id="MF_01356">
    <property type="entry name" value="NDH1_NuoB"/>
    <property type="match status" value="1"/>
</dbReference>
<dbReference type="InterPro" id="IPR006137">
    <property type="entry name" value="NADH_UbQ_OxRdtase-like_20kDa"/>
</dbReference>
<dbReference type="InterPro" id="IPR006138">
    <property type="entry name" value="NADH_UQ_OxRdtase_20Kd_su"/>
</dbReference>
<dbReference type="NCBIfam" id="TIGR01957">
    <property type="entry name" value="nuoB_fam"/>
    <property type="match status" value="1"/>
</dbReference>
<dbReference type="NCBIfam" id="NF005012">
    <property type="entry name" value="PRK06411.1"/>
    <property type="match status" value="1"/>
</dbReference>
<dbReference type="NCBIfam" id="NF011394">
    <property type="entry name" value="PRK14819.1"/>
    <property type="match status" value="1"/>
</dbReference>
<dbReference type="PANTHER" id="PTHR11995">
    <property type="entry name" value="NADH DEHYDROGENASE"/>
    <property type="match status" value="1"/>
</dbReference>
<dbReference type="PANTHER" id="PTHR11995:SF33">
    <property type="entry name" value="NADH-QUINONE OXIDOREDUCTASE SUBUNIT B 2"/>
    <property type="match status" value="1"/>
</dbReference>
<dbReference type="Pfam" id="PF01058">
    <property type="entry name" value="Oxidored_q6"/>
    <property type="match status" value="1"/>
</dbReference>
<dbReference type="SUPFAM" id="SSF56770">
    <property type="entry name" value="HydA/Nqo6-like"/>
    <property type="match status" value="1"/>
</dbReference>
<name>NUOB2_ROSCS</name>
<feature type="chain" id="PRO_0000376349" description="NADH-quinone oxidoreductase subunit B 2">
    <location>
        <begin position="1"/>
        <end position="268"/>
    </location>
</feature>
<feature type="region of interest" description="Disordered" evidence="2">
    <location>
        <begin position="237"/>
        <end position="268"/>
    </location>
</feature>
<feature type="compositionally biased region" description="Basic and acidic residues" evidence="2">
    <location>
        <begin position="247"/>
        <end position="268"/>
    </location>
</feature>
<feature type="binding site" evidence="1">
    <location>
        <position position="42"/>
    </location>
    <ligand>
        <name>[4Fe-4S] cluster</name>
        <dbReference type="ChEBI" id="CHEBI:49883"/>
    </ligand>
</feature>
<feature type="binding site" evidence="1">
    <location>
        <position position="43"/>
    </location>
    <ligand>
        <name>[4Fe-4S] cluster</name>
        <dbReference type="ChEBI" id="CHEBI:49883"/>
    </ligand>
</feature>
<feature type="binding site" evidence="1">
    <location>
        <position position="108"/>
    </location>
    <ligand>
        <name>[4Fe-4S] cluster</name>
        <dbReference type="ChEBI" id="CHEBI:49883"/>
    </ligand>
</feature>
<feature type="binding site" evidence="1">
    <location>
        <position position="138"/>
    </location>
    <ligand>
        <name>[4Fe-4S] cluster</name>
        <dbReference type="ChEBI" id="CHEBI:49883"/>
    </ligand>
</feature>
<sequence>MSDDRDIQLEAEKQGVFLTTMQRFYNWGRRSSVWPLSFGLACCAIEMMATGLARFDLARFGAEMFRASPRQADLMIVAGTVTKKMAPQVVRLYNQMPEPRYVISMGACATSGGPFRDGYNVLRGIDLLIPVDVYIPGCPPRPEALLHALMTLQKQIDAQRLNRVRWYGKREAKEYPVPAFGKHGLEIDGKLVDPVGGLPLISPYTSPTHGEMRSGEIEHPELVRHFPIMDETVELESPNKAKGVAPEIRHNDLKRPAVEVDHARDEQR</sequence>
<keyword id="KW-0004">4Fe-4S</keyword>
<keyword id="KW-1003">Cell membrane</keyword>
<keyword id="KW-0408">Iron</keyword>
<keyword id="KW-0411">Iron-sulfur</keyword>
<keyword id="KW-0472">Membrane</keyword>
<keyword id="KW-0479">Metal-binding</keyword>
<keyword id="KW-0520">NAD</keyword>
<keyword id="KW-0874">Quinone</keyword>
<keyword id="KW-1185">Reference proteome</keyword>
<keyword id="KW-1278">Translocase</keyword>
<keyword id="KW-0813">Transport</keyword>
<keyword id="KW-0830">Ubiquinone</keyword>
<accession>A7NL05</accession>